<feature type="chain" id="PRO_0000145394" description="DNA topoisomerase 4 subunit A">
    <location>
        <begin position="1"/>
        <end position="806"/>
    </location>
</feature>
<feature type="domain" description="Topo IIA-type catalytic" evidence="2">
    <location>
        <begin position="33"/>
        <end position="499"/>
    </location>
</feature>
<feature type="active site" description="O-(5'-phospho-DNA)-tyrosine intermediate" evidence="1">
    <location>
        <position position="121"/>
    </location>
</feature>
<feature type="site" description="Interaction with DNA" evidence="1">
    <location>
        <position position="41"/>
    </location>
</feature>
<feature type="site" description="Interaction with DNA" evidence="1">
    <location>
        <position position="77"/>
    </location>
</feature>
<feature type="site" description="Interaction with DNA" evidence="1">
    <location>
        <position position="79"/>
    </location>
</feature>
<feature type="site" description="Interaction with DNA" evidence="1">
    <location>
        <position position="90"/>
    </location>
</feature>
<feature type="site" description="Interaction with DNA" evidence="1">
    <location>
        <position position="96"/>
    </location>
</feature>
<feature type="site" description="Transition state stabilizer" evidence="1">
    <location>
        <position position="120"/>
    </location>
</feature>
<feature type="sequence conflict" description="In Ref. 1; CAA97607." evidence="3" ref="1">
    <original>V</original>
    <variation>L</variation>
    <location>
        <position position="210"/>
    </location>
</feature>
<organism>
    <name type="scientific">Bacillus subtilis (strain 168)</name>
    <dbReference type="NCBI Taxonomy" id="224308"/>
    <lineage>
        <taxon>Bacteria</taxon>
        <taxon>Bacillati</taxon>
        <taxon>Bacillota</taxon>
        <taxon>Bacilli</taxon>
        <taxon>Bacillales</taxon>
        <taxon>Bacillaceae</taxon>
        <taxon>Bacillus</taxon>
    </lineage>
</organism>
<accession>Q45066</accession>
<accession>O30998</accession>
<comment type="function">
    <text evidence="1">Topoisomerase IV is essential for chromosome segregation. It relaxes supercoiled DNA. Performs the decatenation events required during the replication of a circular DNA molecule.</text>
</comment>
<comment type="catalytic activity">
    <reaction evidence="1">
        <text>ATP-dependent breakage, passage and rejoining of double-stranded DNA.</text>
        <dbReference type="EC" id="5.6.2.2"/>
    </reaction>
</comment>
<comment type="subunit">
    <text evidence="1">Heterotetramer composed of ParC and ParE.</text>
</comment>
<comment type="subcellular location">
    <subcellularLocation>
        <location evidence="1">Cell membrane</location>
        <topology evidence="1">Peripheral membrane protein</topology>
    </subcellularLocation>
    <subcellularLocation>
        <location>Cytoplasm</location>
    </subcellularLocation>
    <text>Bipolarly localized.</text>
</comment>
<comment type="similarity">
    <text evidence="1">Belongs to the type II topoisomerase GyrA/ParC subunit family. ParC type 2 subfamily.</text>
</comment>
<protein>
    <recommendedName>
        <fullName evidence="1">DNA topoisomerase 4 subunit A</fullName>
        <ecNumber evidence="1">5.6.2.2</ecNumber>
    </recommendedName>
    <alternativeName>
        <fullName evidence="1">Topoisomerase IV subunit A</fullName>
    </alternativeName>
</protein>
<proteinExistence type="inferred from homology"/>
<gene>
    <name evidence="1" type="primary">parC</name>
    <name type="synonym">grlA</name>
    <name type="ordered locus">BSU18100</name>
</gene>
<keyword id="KW-1003">Cell membrane</keyword>
<keyword id="KW-0963">Cytoplasm</keyword>
<keyword id="KW-0238">DNA-binding</keyword>
<keyword id="KW-0413">Isomerase</keyword>
<keyword id="KW-0472">Membrane</keyword>
<keyword id="KW-1185">Reference proteome</keyword>
<keyword id="KW-0799">Topoisomerase</keyword>
<dbReference type="EC" id="5.6.2.2" evidence="1"/>
<dbReference type="EMBL" id="Z73234">
    <property type="protein sequence ID" value="CAA97607.1"/>
    <property type="molecule type" value="Genomic_DNA"/>
</dbReference>
<dbReference type="EMBL" id="AF024713">
    <property type="protein sequence ID" value="AAB81615.1"/>
    <property type="molecule type" value="Genomic_DNA"/>
</dbReference>
<dbReference type="EMBL" id="AL009126">
    <property type="protein sequence ID" value="CAB13693.2"/>
    <property type="molecule type" value="Genomic_DNA"/>
</dbReference>
<dbReference type="PIR" id="B69637">
    <property type="entry name" value="B69637"/>
</dbReference>
<dbReference type="RefSeq" id="NP_389692.2">
    <property type="nucleotide sequence ID" value="NC_000964.3"/>
</dbReference>
<dbReference type="RefSeq" id="WP_003231550.1">
    <property type="nucleotide sequence ID" value="NZ_OZ025638.1"/>
</dbReference>
<dbReference type="SMR" id="Q45066"/>
<dbReference type="FunCoup" id="Q45066">
    <property type="interactions" value="11"/>
</dbReference>
<dbReference type="STRING" id="224308.BSU18100"/>
<dbReference type="BindingDB" id="Q45066"/>
<dbReference type="DrugCentral" id="Q45066"/>
<dbReference type="jPOST" id="Q45066"/>
<dbReference type="PaxDb" id="224308-BSU18100"/>
<dbReference type="EnsemblBacteria" id="CAB13693">
    <property type="protein sequence ID" value="CAB13693"/>
    <property type="gene ID" value="BSU_18100"/>
</dbReference>
<dbReference type="GeneID" id="937107"/>
<dbReference type="KEGG" id="bsu:BSU18100"/>
<dbReference type="PATRIC" id="fig|224308.179.peg.1972"/>
<dbReference type="eggNOG" id="COG0188">
    <property type="taxonomic scope" value="Bacteria"/>
</dbReference>
<dbReference type="InParanoid" id="Q45066"/>
<dbReference type="OrthoDB" id="9806486at2"/>
<dbReference type="PhylomeDB" id="Q45066"/>
<dbReference type="BioCyc" id="BSUB:BSU18100-MONOMER"/>
<dbReference type="Proteomes" id="UP000001570">
    <property type="component" value="Chromosome"/>
</dbReference>
<dbReference type="GO" id="GO:0005694">
    <property type="term" value="C:chromosome"/>
    <property type="evidence" value="ECO:0007669"/>
    <property type="project" value="InterPro"/>
</dbReference>
<dbReference type="GO" id="GO:0005737">
    <property type="term" value="C:cytoplasm"/>
    <property type="evidence" value="ECO:0000318"/>
    <property type="project" value="GO_Central"/>
</dbReference>
<dbReference type="GO" id="GO:0009330">
    <property type="term" value="C:DNA topoisomerase type II (double strand cut, ATP-hydrolyzing) complex"/>
    <property type="evidence" value="ECO:0000318"/>
    <property type="project" value="GO_Central"/>
</dbReference>
<dbReference type="GO" id="GO:0019897">
    <property type="term" value="C:extrinsic component of plasma membrane"/>
    <property type="evidence" value="ECO:0007669"/>
    <property type="project" value="UniProtKB-UniRule"/>
</dbReference>
<dbReference type="GO" id="GO:0005524">
    <property type="term" value="F:ATP binding"/>
    <property type="evidence" value="ECO:0000318"/>
    <property type="project" value="GO_Central"/>
</dbReference>
<dbReference type="GO" id="GO:0003677">
    <property type="term" value="F:DNA binding"/>
    <property type="evidence" value="ECO:0000318"/>
    <property type="project" value="GO_Central"/>
</dbReference>
<dbReference type="GO" id="GO:0034335">
    <property type="term" value="F:DNA negative supercoiling activity"/>
    <property type="evidence" value="ECO:0007669"/>
    <property type="project" value="UniProtKB-ARBA"/>
</dbReference>
<dbReference type="GO" id="GO:0007059">
    <property type="term" value="P:chromosome segregation"/>
    <property type="evidence" value="ECO:0007669"/>
    <property type="project" value="UniProtKB-UniRule"/>
</dbReference>
<dbReference type="GO" id="GO:0006265">
    <property type="term" value="P:DNA topological change"/>
    <property type="evidence" value="ECO:0000318"/>
    <property type="project" value="GO_Central"/>
</dbReference>
<dbReference type="CDD" id="cd00187">
    <property type="entry name" value="TOP4c"/>
    <property type="match status" value="1"/>
</dbReference>
<dbReference type="FunFam" id="1.10.268.10:FF:000001">
    <property type="entry name" value="DNA gyrase subunit A"/>
    <property type="match status" value="1"/>
</dbReference>
<dbReference type="FunFam" id="3.30.1360.40:FF:000002">
    <property type="entry name" value="DNA gyrase subunit A"/>
    <property type="match status" value="1"/>
</dbReference>
<dbReference type="FunFam" id="3.90.199.10:FF:000001">
    <property type="entry name" value="DNA gyrase subunit A"/>
    <property type="match status" value="1"/>
</dbReference>
<dbReference type="FunFam" id="2.120.10.90:FF:000005">
    <property type="entry name" value="DNA topoisomerase 4 subunit A"/>
    <property type="match status" value="1"/>
</dbReference>
<dbReference type="Gene3D" id="3.30.1360.40">
    <property type="match status" value="1"/>
</dbReference>
<dbReference type="Gene3D" id="2.120.10.90">
    <property type="entry name" value="DNA gyrase/topoisomerase IV, subunit A, C-terminal"/>
    <property type="match status" value="1"/>
</dbReference>
<dbReference type="Gene3D" id="3.90.199.10">
    <property type="entry name" value="Topoisomerase II, domain 5"/>
    <property type="match status" value="1"/>
</dbReference>
<dbReference type="Gene3D" id="1.10.268.10">
    <property type="entry name" value="Topoisomerase, domain 3"/>
    <property type="match status" value="1"/>
</dbReference>
<dbReference type="HAMAP" id="MF_00937">
    <property type="entry name" value="ParC_type2"/>
    <property type="match status" value="1"/>
</dbReference>
<dbReference type="InterPro" id="IPR006691">
    <property type="entry name" value="GyrA/parC_rep"/>
</dbReference>
<dbReference type="InterPro" id="IPR035516">
    <property type="entry name" value="Gyrase/topoIV_suA_C"/>
</dbReference>
<dbReference type="InterPro" id="IPR013760">
    <property type="entry name" value="Topo_IIA-like_dom_sf"/>
</dbReference>
<dbReference type="InterPro" id="IPR013758">
    <property type="entry name" value="Topo_IIA_A/C_ab"/>
</dbReference>
<dbReference type="InterPro" id="IPR013757">
    <property type="entry name" value="Topo_IIA_A_a_sf"/>
</dbReference>
<dbReference type="InterPro" id="IPR002205">
    <property type="entry name" value="Topo_IIA_dom_A"/>
</dbReference>
<dbReference type="InterPro" id="IPR005741">
    <property type="entry name" value="TopoIV_A_Gpos"/>
</dbReference>
<dbReference type="InterPro" id="IPR050220">
    <property type="entry name" value="Type_II_DNA_Topoisomerases"/>
</dbReference>
<dbReference type="NCBIfam" id="TIGR01063">
    <property type="entry name" value="gyrA"/>
    <property type="match status" value="1"/>
</dbReference>
<dbReference type="NCBIfam" id="TIGR01061">
    <property type="entry name" value="parC_Gpos"/>
    <property type="match status" value="1"/>
</dbReference>
<dbReference type="NCBIfam" id="NF004044">
    <property type="entry name" value="PRK05561.1"/>
    <property type="match status" value="1"/>
</dbReference>
<dbReference type="PANTHER" id="PTHR43493">
    <property type="entry name" value="DNA GYRASE/TOPOISOMERASE SUBUNIT A"/>
    <property type="match status" value="1"/>
</dbReference>
<dbReference type="PANTHER" id="PTHR43493:SF9">
    <property type="entry name" value="DNA TOPOISOMERASE 4 SUBUNIT A"/>
    <property type="match status" value="1"/>
</dbReference>
<dbReference type="Pfam" id="PF03989">
    <property type="entry name" value="DNA_gyraseA_C"/>
    <property type="match status" value="5"/>
</dbReference>
<dbReference type="Pfam" id="PF00521">
    <property type="entry name" value="DNA_topoisoIV"/>
    <property type="match status" value="1"/>
</dbReference>
<dbReference type="SMART" id="SM00434">
    <property type="entry name" value="TOP4c"/>
    <property type="match status" value="1"/>
</dbReference>
<dbReference type="SUPFAM" id="SSF101904">
    <property type="entry name" value="GyrA/ParC C-terminal domain-like"/>
    <property type="match status" value="1"/>
</dbReference>
<dbReference type="SUPFAM" id="SSF56719">
    <property type="entry name" value="Type II DNA topoisomerase"/>
    <property type="match status" value="1"/>
</dbReference>
<dbReference type="PROSITE" id="PS52040">
    <property type="entry name" value="TOPO_IIA"/>
    <property type="match status" value="1"/>
</dbReference>
<reference key="1">
    <citation type="journal article" date="1996" name="Microbiology">
        <title>New genes in the 170 degrees region of the Bacillus subtilis genome encode DNA gyrase subunits, a thioredoxin, a xylanase and an amino acid transporter.</title>
        <authorList>
            <person name="Rose M."/>
            <person name="Entian K.-D."/>
        </authorList>
    </citation>
    <scope>NUCLEOTIDE SEQUENCE [GENOMIC DNA]</scope>
    <source>
        <strain>168</strain>
    </source>
</reference>
<reference key="2">
    <citation type="journal article" date="1998" name="Proc. Natl. Acad. Sci. U.S.A.">
        <title>Bipolar localization of Bacillus subtilis topoisomerase IV, an enzyme required for chromosome segregation.</title>
        <authorList>
            <person name="Huang W.M."/>
            <person name="Libbey J.L."/>
            <person name="van de Hoeven P."/>
            <person name="Yu S.X."/>
        </authorList>
    </citation>
    <scope>NUCLEOTIDE SEQUENCE [GENOMIC DNA]</scope>
    <source>
        <strain>168 / CB10</strain>
    </source>
</reference>
<reference key="3">
    <citation type="journal article" date="1997" name="Nature">
        <title>The complete genome sequence of the Gram-positive bacterium Bacillus subtilis.</title>
        <authorList>
            <person name="Kunst F."/>
            <person name="Ogasawara N."/>
            <person name="Moszer I."/>
            <person name="Albertini A.M."/>
            <person name="Alloni G."/>
            <person name="Azevedo V."/>
            <person name="Bertero M.G."/>
            <person name="Bessieres P."/>
            <person name="Bolotin A."/>
            <person name="Borchert S."/>
            <person name="Borriss R."/>
            <person name="Boursier L."/>
            <person name="Brans A."/>
            <person name="Braun M."/>
            <person name="Brignell S.C."/>
            <person name="Bron S."/>
            <person name="Brouillet S."/>
            <person name="Bruschi C.V."/>
            <person name="Caldwell B."/>
            <person name="Capuano V."/>
            <person name="Carter N.M."/>
            <person name="Choi S.-K."/>
            <person name="Codani J.-J."/>
            <person name="Connerton I.F."/>
            <person name="Cummings N.J."/>
            <person name="Daniel R.A."/>
            <person name="Denizot F."/>
            <person name="Devine K.M."/>
            <person name="Duesterhoeft A."/>
            <person name="Ehrlich S.D."/>
            <person name="Emmerson P.T."/>
            <person name="Entian K.-D."/>
            <person name="Errington J."/>
            <person name="Fabret C."/>
            <person name="Ferrari E."/>
            <person name="Foulger D."/>
            <person name="Fritz C."/>
            <person name="Fujita M."/>
            <person name="Fujita Y."/>
            <person name="Fuma S."/>
            <person name="Galizzi A."/>
            <person name="Galleron N."/>
            <person name="Ghim S.-Y."/>
            <person name="Glaser P."/>
            <person name="Goffeau A."/>
            <person name="Golightly E.J."/>
            <person name="Grandi G."/>
            <person name="Guiseppi G."/>
            <person name="Guy B.J."/>
            <person name="Haga K."/>
            <person name="Haiech J."/>
            <person name="Harwood C.R."/>
            <person name="Henaut A."/>
            <person name="Hilbert H."/>
            <person name="Holsappel S."/>
            <person name="Hosono S."/>
            <person name="Hullo M.-F."/>
            <person name="Itaya M."/>
            <person name="Jones L.-M."/>
            <person name="Joris B."/>
            <person name="Karamata D."/>
            <person name="Kasahara Y."/>
            <person name="Klaerr-Blanchard M."/>
            <person name="Klein C."/>
            <person name="Kobayashi Y."/>
            <person name="Koetter P."/>
            <person name="Koningstein G."/>
            <person name="Krogh S."/>
            <person name="Kumano M."/>
            <person name="Kurita K."/>
            <person name="Lapidus A."/>
            <person name="Lardinois S."/>
            <person name="Lauber J."/>
            <person name="Lazarevic V."/>
            <person name="Lee S.-M."/>
            <person name="Levine A."/>
            <person name="Liu H."/>
            <person name="Masuda S."/>
            <person name="Mauel C."/>
            <person name="Medigue C."/>
            <person name="Medina N."/>
            <person name="Mellado R.P."/>
            <person name="Mizuno M."/>
            <person name="Moestl D."/>
            <person name="Nakai S."/>
            <person name="Noback M."/>
            <person name="Noone D."/>
            <person name="O'Reilly M."/>
            <person name="Ogawa K."/>
            <person name="Ogiwara A."/>
            <person name="Oudega B."/>
            <person name="Park S.-H."/>
            <person name="Parro V."/>
            <person name="Pohl T.M."/>
            <person name="Portetelle D."/>
            <person name="Porwollik S."/>
            <person name="Prescott A.M."/>
            <person name="Presecan E."/>
            <person name="Pujic P."/>
            <person name="Purnelle B."/>
            <person name="Rapoport G."/>
            <person name="Rey M."/>
            <person name="Reynolds S."/>
            <person name="Rieger M."/>
            <person name="Rivolta C."/>
            <person name="Rocha E."/>
            <person name="Roche B."/>
            <person name="Rose M."/>
            <person name="Sadaie Y."/>
            <person name="Sato T."/>
            <person name="Scanlan E."/>
            <person name="Schleich S."/>
            <person name="Schroeter R."/>
            <person name="Scoffone F."/>
            <person name="Sekiguchi J."/>
            <person name="Sekowska A."/>
            <person name="Seror S.J."/>
            <person name="Serror P."/>
            <person name="Shin B.-S."/>
            <person name="Soldo B."/>
            <person name="Sorokin A."/>
            <person name="Tacconi E."/>
            <person name="Takagi T."/>
            <person name="Takahashi H."/>
            <person name="Takemaru K."/>
            <person name="Takeuchi M."/>
            <person name="Tamakoshi A."/>
            <person name="Tanaka T."/>
            <person name="Terpstra P."/>
            <person name="Tognoni A."/>
            <person name="Tosato V."/>
            <person name="Uchiyama S."/>
            <person name="Vandenbol M."/>
            <person name="Vannier F."/>
            <person name="Vassarotti A."/>
            <person name="Viari A."/>
            <person name="Wambutt R."/>
            <person name="Wedler E."/>
            <person name="Wedler H."/>
            <person name="Weitzenegger T."/>
            <person name="Winters P."/>
            <person name="Wipat A."/>
            <person name="Yamamoto H."/>
            <person name="Yamane K."/>
            <person name="Yasumoto K."/>
            <person name="Yata K."/>
            <person name="Yoshida K."/>
            <person name="Yoshikawa H.-F."/>
            <person name="Zumstein E."/>
            <person name="Yoshikawa H."/>
            <person name="Danchin A."/>
        </authorList>
    </citation>
    <scope>NUCLEOTIDE SEQUENCE [LARGE SCALE GENOMIC DNA]</scope>
    <source>
        <strain>168</strain>
    </source>
</reference>
<reference key="4">
    <citation type="journal article" date="2009" name="Microbiology">
        <title>From a consortium sequence to a unified sequence: the Bacillus subtilis 168 reference genome a decade later.</title>
        <authorList>
            <person name="Barbe V."/>
            <person name="Cruveiller S."/>
            <person name="Kunst F."/>
            <person name="Lenoble P."/>
            <person name="Meurice G."/>
            <person name="Sekowska A."/>
            <person name="Vallenet D."/>
            <person name="Wang T."/>
            <person name="Moszer I."/>
            <person name="Medigue C."/>
            <person name="Danchin A."/>
        </authorList>
    </citation>
    <scope>SEQUENCE REVISION TO 210</scope>
</reference>
<evidence type="ECO:0000255" key="1">
    <source>
        <dbReference type="HAMAP-Rule" id="MF_00937"/>
    </source>
</evidence>
<evidence type="ECO:0000255" key="2">
    <source>
        <dbReference type="PROSITE-ProRule" id="PRU01384"/>
    </source>
</evidence>
<evidence type="ECO:0000305" key="3"/>
<sequence length="806" mass="91321">MSQPELFHDLPLEEVIGDRFGRYSKYIIQDRALPDARDGLKPVQRRILYAMHTDGNTFDKNFRKAAKTVGNVIGNYHPHGDSSVYEAMVRMSQDWKVRNVLIEMHGNNGSIDGDPPAAMRYTEARLSPIASELLRDIDKNTVEFVPNFDDTSKEPVVLPAMFPNLLVNGSTGISAGYATDIPPHHLGEVIDAVIKRIQMPSCSVDELMEVIKGPDFPTGGIIQGVDGIRKAYETGKGKIIIRGKAEIETIRGGREQIVITEIPFEVNKANLVKKMDEFRIDKKVEGISEVRDETDRTGLRVVIELKKEADAKGILNFLYKNTDLQITYNFNMVAIHNRRPMLMSLPSILDAYIGHQKEVVTNRSVYELQKAKDRHHIVEGLMKALSILDEVIATIRSSSDKRDAKNNLIAKYEFTEPQAEAIVSLQLYRLTNTDITALKEEAEELGKKIEELESILSNDKKLLKVITNSLKALKKKYADTRRSVIEEKIEEIKINLEVMVASEDVYVTVTKDGYLKRTSQRSFAASNGQDFGMKDTDRMLHQFEMNTTDVLLLFTNKGSYIYCPVHQLPDIRWKDMGQHFSNLITIDRDETIVKAIPIKEFDPSAYLLFFTKNGMVKKTELTHYKAQRYSKALVALNLKGEDELIDVHVTNGESQIFMATHLGYGLWFGEDEVNVVGARAAGVKGINLKEDDFVVSGEILQQSDSIVLFTQRGAVKRMSLSEFEKTSRAKRGVVMLRELKKNPHRVVALFACGLEQRLMAETEKGDRKELQTKELRTNDRYSNGSFFFDEEESGKVTAVWRLHTEQ</sequence>
<name>PARC_BACSU</name>